<name>RL11_TRIL1</name>
<organism>
    <name type="scientific">Trichlorobacter lovleyi (strain ATCC BAA-1151 / DSM 17278 / SZ)</name>
    <name type="common">Geobacter lovleyi</name>
    <dbReference type="NCBI Taxonomy" id="398767"/>
    <lineage>
        <taxon>Bacteria</taxon>
        <taxon>Pseudomonadati</taxon>
        <taxon>Thermodesulfobacteriota</taxon>
        <taxon>Desulfuromonadia</taxon>
        <taxon>Geobacterales</taxon>
        <taxon>Geobacteraceae</taxon>
        <taxon>Trichlorobacter</taxon>
    </lineage>
</organism>
<protein>
    <recommendedName>
        <fullName evidence="1">Large ribosomal subunit protein uL11</fullName>
    </recommendedName>
    <alternativeName>
        <fullName evidence="2">50S ribosomal protein L11</fullName>
    </alternativeName>
</protein>
<evidence type="ECO:0000255" key="1">
    <source>
        <dbReference type="HAMAP-Rule" id="MF_00736"/>
    </source>
</evidence>
<evidence type="ECO:0000305" key="2"/>
<accession>B3E7S4</accession>
<gene>
    <name evidence="1" type="primary">rplK</name>
    <name type="ordered locus">Glov_1335</name>
</gene>
<sequence>MAKKITGYIKLQIPAGKANPSPPIGPALGQHGVNIMEFCKAFNAKTQADEGTITPVVITVYADRSFSFITKTPPVPVLIKKTIGIESGSSVPNKNKVGKLTKAQVEEIAKKKMPDLNAASVEAAMRTVEGTARSMGVDIVE</sequence>
<proteinExistence type="inferred from homology"/>
<keyword id="KW-0488">Methylation</keyword>
<keyword id="KW-1185">Reference proteome</keyword>
<keyword id="KW-0687">Ribonucleoprotein</keyword>
<keyword id="KW-0689">Ribosomal protein</keyword>
<keyword id="KW-0694">RNA-binding</keyword>
<keyword id="KW-0699">rRNA-binding</keyword>
<comment type="function">
    <text evidence="1">Forms part of the ribosomal stalk which helps the ribosome interact with GTP-bound translation factors.</text>
</comment>
<comment type="subunit">
    <text evidence="1">Part of the ribosomal stalk of the 50S ribosomal subunit. Interacts with L10 and the large rRNA to form the base of the stalk. L10 forms an elongated spine to which L12 dimers bind in a sequential fashion forming a multimeric L10(L12)X complex.</text>
</comment>
<comment type="PTM">
    <text evidence="1">One or more lysine residues are methylated.</text>
</comment>
<comment type="similarity">
    <text evidence="1">Belongs to the universal ribosomal protein uL11 family.</text>
</comment>
<reference key="1">
    <citation type="submission" date="2008-05" db="EMBL/GenBank/DDBJ databases">
        <title>Complete sequence of chromosome of Geobacter lovleyi SZ.</title>
        <authorList>
            <consortium name="US DOE Joint Genome Institute"/>
            <person name="Lucas S."/>
            <person name="Copeland A."/>
            <person name="Lapidus A."/>
            <person name="Glavina del Rio T."/>
            <person name="Dalin E."/>
            <person name="Tice H."/>
            <person name="Bruce D."/>
            <person name="Goodwin L."/>
            <person name="Pitluck S."/>
            <person name="Chertkov O."/>
            <person name="Meincke L."/>
            <person name="Brettin T."/>
            <person name="Detter J.C."/>
            <person name="Han C."/>
            <person name="Tapia R."/>
            <person name="Kuske C.R."/>
            <person name="Schmutz J."/>
            <person name="Larimer F."/>
            <person name="Land M."/>
            <person name="Hauser L."/>
            <person name="Kyrpides N."/>
            <person name="Mikhailova N."/>
            <person name="Sung Y."/>
            <person name="Fletcher K.E."/>
            <person name="Ritalahti K.M."/>
            <person name="Loeffler F.E."/>
            <person name="Richardson P."/>
        </authorList>
    </citation>
    <scope>NUCLEOTIDE SEQUENCE [LARGE SCALE GENOMIC DNA]</scope>
    <source>
        <strain>ATCC BAA-1151 / DSM 17278 / SZ</strain>
    </source>
</reference>
<feature type="chain" id="PRO_1000195644" description="Large ribosomal subunit protein uL11">
    <location>
        <begin position="1"/>
        <end position="141"/>
    </location>
</feature>
<dbReference type="EMBL" id="CP001089">
    <property type="protein sequence ID" value="ACD95056.1"/>
    <property type="molecule type" value="Genomic_DNA"/>
</dbReference>
<dbReference type="RefSeq" id="WP_012469402.1">
    <property type="nucleotide sequence ID" value="NC_010814.1"/>
</dbReference>
<dbReference type="SMR" id="B3E7S4"/>
<dbReference type="STRING" id="398767.Glov_1335"/>
<dbReference type="KEGG" id="glo:Glov_1335"/>
<dbReference type="eggNOG" id="COG0080">
    <property type="taxonomic scope" value="Bacteria"/>
</dbReference>
<dbReference type="HOGENOM" id="CLU_074237_2_1_7"/>
<dbReference type="OrthoDB" id="9802408at2"/>
<dbReference type="Proteomes" id="UP000002420">
    <property type="component" value="Chromosome"/>
</dbReference>
<dbReference type="GO" id="GO:0022625">
    <property type="term" value="C:cytosolic large ribosomal subunit"/>
    <property type="evidence" value="ECO:0007669"/>
    <property type="project" value="TreeGrafter"/>
</dbReference>
<dbReference type="GO" id="GO:0070180">
    <property type="term" value="F:large ribosomal subunit rRNA binding"/>
    <property type="evidence" value="ECO:0007669"/>
    <property type="project" value="UniProtKB-UniRule"/>
</dbReference>
<dbReference type="GO" id="GO:0003735">
    <property type="term" value="F:structural constituent of ribosome"/>
    <property type="evidence" value="ECO:0007669"/>
    <property type="project" value="InterPro"/>
</dbReference>
<dbReference type="GO" id="GO:0006412">
    <property type="term" value="P:translation"/>
    <property type="evidence" value="ECO:0007669"/>
    <property type="project" value="UniProtKB-UniRule"/>
</dbReference>
<dbReference type="CDD" id="cd00349">
    <property type="entry name" value="Ribosomal_L11"/>
    <property type="match status" value="1"/>
</dbReference>
<dbReference type="FunFam" id="1.10.10.250:FF:000001">
    <property type="entry name" value="50S ribosomal protein L11"/>
    <property type="match status" value="1"/>
</dbReference>
<dbReference type="FunFam" id="3.30.1550.10:FF:000001">
    <property type="entry name" value="50S ribosomal protein L11"/>
    <property type="match status" value="1"/>
</dbReference>
<dbReference type="Gene3D" id="1.10.10.250">
    <property type="entry name" value="Ribosomal protein L11, C-terminal domain"/>
    <property type="match status" value="1"/>
</dbReference>
<dbReference type="Gene3D" id="3.30.1550.10">
    <property type="entry name" value="Ribosomal protein L11/L12, N-terminal domain"/>
    <property type="match status" value="1"/>
</dbReference>
<dbReference type="HAMAP" id="MF_00736">
    <property type="entry name" value="Ribosomal_uL11"/>
    <property type="match status" value="1"/>
</dbReference>
<dbReference type="InterPro" id="IPR000911">
    <property type="entry name" value="Ribosomal_uL11"/>
</dbReference>
<dbReference type="InterPro" id="IPR006519">
    <property type="entry name" value="Ribosomal_uL11_bac-typ"/>
</dbReference>
<dbReference type="InterPro" id="IPR020783">
    <property type="entry name" value="Ribosomal_uL11_C"/>
</dbReference>
<dbReference type="InterPro" id="IPR036769">
    <property type="entry name" value="Ribosomal_uL11_C_sf"/>
</dbReference>
<dbReference type="InterPro" id="IPR020785">
    <property type="entry name" value="Ribosomal_uL11_CS"/>
</dbReference>
<dbReference type="InterPro" id="IPR020784">
    <property type="entry name" value="Ribosomal_uL11_N"/>
</dbReference>
<dbReference type="InterPro" id="IPR036796">
    <property type="entry name" value="Ribosomal_uL11_N_sf"/>
</dbReference>
<dbReference type="NCBIfam" id="TIGR01632">
    <property type="entry name" value="L11_bact"/>
    <property type="match status" value="1"/>
</dbReference>
<dbReference type="PANTHER" id="PTHR11661">
    <property type="entry name" value="60S RIBOSOMAL PROTEIN L12"/>
    <property type="match status" value="1"/>
</dbReference>
<dbReference type="PANTHER" id="PTHR11661:SF1">
    <property type="entry name" value="LARGE RIBOSOMAL SUBUNIT PROTEIN UL11M"/>
    <property type="match status" value="1"/>
</dbReference>
<dbReference type="Pfam" id="PF00298">
    <property type="entry name" value="Ribosomal_L11"/>
    <property type="match status" value="1"/>
</dbReference>
<dbReference type="Pfam" id="PF03946">
    <property type="entry name" value="Ribosomal_L11_N"/>
    <property type="match status" value="1"/>
</dbReference>
<dbReference type="SMART" id="SM00649">
    <property type="entry name" value="RL11"/>
    <property type="match status" value="1"/>
</dbReference>
<dbReference type="SUPFAM" id="SSF54747">
    <property type="entry name" value="Ribosomal L11/L12e N-terminal domain"/>
    <property type="match status" value="1"/>
</dbReference>
<dbReference type="SUPFAM" id="SSF46906">
    <property type="entry name" value="Ribosomal protein L11, C-terminal domain"/>
    <property type="match status" value="1"/>
</dbReference>
<dbReference type="PROSITE" id="PS00359">
    <property type="entry name" value="RIBOSOMAL_L11"/>
    <property type="match status" value="1"/>
</dbReference>